<protein>
    <recommendedName>
        <fullName evidence="1">Large ribosomal subunit protein bL21</fullName>
    </recommendedName>
    <alternativeName>
        <fullName evidence="2">50S ribosomal protein L21</fullName>
    </alternativeName>
</protein>
<proteinExistence type="inferred from homology"/>
<evidence type="ECO:0000255" key="1">
    <source>
        <dbReference type="HAMAP-Rule" id="MF_01363"/>
    </source>
</evidence>
<evidence type="ECO:0000305" key="2"/>
<comment type="function">
    <text evidence="1">This protein binds to 23S rRNA in the presence of protein L20.</text>
</comment>
<comment type="subunit">
    <text evidence="1">Part of the 50S ribosomal subunit. Contacts protein L20.</text>
</comment>
<comment type="similarity">
    <text evidence="1">Belongs to the bacterial ribosomal protein bL21 family.</text>
</comment>
<accession>Q71ZC8</accession>
<name>RL21_LISMF</name>
<feature type="chain" id="PRO_0000269339" description="Large ribosomal subunit protein bL21">
    <location>
        <begin position="1"/>
        <end position="102"/>
    </location>
</feature>
<gene>
    <name evidence="1" type="primary">rplU</name>
    <name type="ordered locus">LMOf2365_1561</name>
</gene>
<keyword id="KW-0687">Ribonucleoprotein</keyword>
<keyword id="KW-0689">Ribosomal protein</keyword>
<keyword id="KW-0694">RNA-binding</keyword>
<keyword id="KW-0699">rRNA-binding</keyword>
<dbReference type="EMBL" id="AE017262">
    <property type="protein sequence ID" value="AAT04336.1"/>
    <property type="molecule type" value="Genomic_DNA"/>
</dbReference>
<dbReference type="RefSeq" id="WP_003726868.1">
    <property type="nucleotide sequence ID" value="NC_002973.6"/>
</dbReference>
<dbReference type="SMR" id="Q71ZC8"/>
<dbReference type="GeneID" id="93239421"/>
<dbReference type="KEGG" id="lmf:LMOf2365_1561"/>
<dbReference type="HOGENOM" id="CLU_061463_3_2_9"/>
<dbReference type="GO" id="GO:0005737">
    <property type="term" value="C:cytoplasm"/>
    <property type="evidence" value="ECO:0007669"/>
    <property type="project" value="UniProtKB-ARBA"/>
</dbReference>
<dbReference type="GO" id="GO:1990904">
    <property type="term" value="C:ribonucleoprotein complex"/>
    <property type="evidence" value="ECO:0007669"/>
    <property type="project" value="UniProtKB-KW"/>
</dbReference>
<dbReference type="GO" id="GO:0005840">
    <property type="term" value="C:ribosome"/>
    <property type="evidence" value="ECO:0007669"/>
    <property type="project" value="UniProtKB-KW"/>
</dbReference>
<dbReference type="GO" id="GO:0019843">
    <property type="term" value="F:rRNA binding"/>
    <property type="evidence" value="ECO:0007669"/>
    <property type="project" value="UniProtKB-UniRule"/>
</dbReference>
<dbReference type="GO" id="GO:0003735">
    <property type="term" value="F:structural constituent of ribosome"/>
    <property type="evidence" value="ECO:0007669"/>
    <property type="project" value="InterPro"/>
</dbReference>
<dbReference type="GO" id="GO:0006412">
    <property type="term" value="P:translation"/>
    <property type="evidence" value="ECO:0007669"/>
    <property type="project" value="UniProtKB-UniRule"/>
</dbReference>
<dbReference type="HAMAP" id="MF_01363">
    <property type="entry name" value="Ribosomal_bL21"/>
    <property type="match status" value="1"/>
</dbReference>
<dbReference type="InterPro" id="IPR028909">
    <property type="entry name" value="bL21-like"/>
</dbReference>
<dbReference type="InterPro" id="IPR036164">
    <property type="entry name" value="bL21-like_sf"/>
</dbReference>
<dbReference type="InterPro" id="IPR001787">
    <property type="entry name" value="Ribosomal_bL21"/>
</dbReference>
<dbReference type="InterPro" id="IPR018258">
    <property type="entry name" value="Ribosomal_bL21_CS"/>
</dbReference>
<dbReference type="NCBIfam" id="TIGR00061">
    <property type="entry name" value="L21"/>
    <property type="match status" value="1"/>
</dbReference>
<dbReference type="PANTHER" id="PTHR21349">
    <property type="entry name" value="50S RIBOSOMAL PROTEIN L21"/>
    <property type="match status" value="1"/>
</dbReference>
<dbReference type="PANTHER" id="PTHR21349:SF0">
    <property type="entry name" value="LARGE RIBOSOMAL SUBUNIT PROTEIN BL21M"/>
    <property type="match status" value="1"/>
</dbReference>
<dbReference type="Pfam" id="PF00829">
    <property type="entry name" value="Ribosomal_L21p"/>
    <property type="match status" value="1"/>
</dbReference>
<dbReference type="SUPFAM" id="SSF141091">
    <property type="entry name" value="L21p-like"/>
    <property type="match status" value="1"/>
</dbReference>
<dbReference type="PROSITE" id="PS01169">
    <property type="entry name" value="RIBOSOMAL_L21"/>
    <property type="match status" value="1"/>
</dbReference>
<reference key="1">
    <citation type="journal article" date="2004" name="Nucleic Acids Res.">
        <title>Whole genome comparisons of serotype 4b and 1/2a strains of the food-borne pathogen Listeria monocytogenes reveal new insights into the core genome components of this species.</title>
        <authorList>
            <person name="Nelson K.E."/>
            <person name="Fouts D.E."/>
            <person name="Mongodin E.F."/>
            <person name="Ravel J."/>
            <person name="DeBoy R.T."/>
            <person name="Kolonay J.F."/>
            <person name="Rasko D.A."/>
            <person name="Angiuoli S.V."/>
            <person name="Gill S.R."/>
            <person name="Paulsen I.T."/>
            <person name="Peterson J.D."/>
            <person name="White O."/>
            <person name="Nelson W.C."/>
            <person name="Nierman W.C."/>
            <person name="Beanan M.J."/>
            <person name="Brinkac L.M."/>
            <person name="Daugherty S.C."/>
            <person name="Dodson R.J."/>
            <person name="Durkin A.S."/>
            <person name="Madupu R."/>
            <person name="Haft D.H."/>
            <person name="Selengut J."/>
            <person name="Van Aken S.E."/>
            <person name="Khouri H.M."/>
            <person name="Fedorova N."/>
            <person name="Forberger H.A."/>
            <person name="Tran B."/>
            <person name="Kathariou S."/>
            <person name="Wonderling L.D."/>
            <person name="Uhlich G.A."/>
            <person name="Bayles D.O."/>
            <person name="Luchansky J.B."/>
            <person name="Fraser C.M."/>
        </authorList>
    </citation>
    <scope>NUCLEOTIDE SEQUENCE [LARGE SCALE GENOMIC DNA]</scope>
    <source>
        <strain>F2365</strain>
    </source>
</reference>
<organism>
    <name type="scientific">Listeria monocytogenes serotype 4b (strain F2365)</name>
    <dbReference type="NCBI Taxonomy" id="265669"/>
    <lineage>
        <taxon>Bacteria</taxon>
        <taxon>Bacillati</taxon>
        <taxon>Bacillota</taxon>
        <taxon>Bacilli</taxon>
        <taxon>Bacillales</taxon>
        <taxon>Listeriaceae</taxon>
        <taxon>Listeria</taxon>
    </lineage>
</organism>
<sequence length="102" mass="11214">MYAIIETGGKQIKVEAGQEIYVEKLAGEVGDVVTFDKVLFVGGDSAKVGVPFVEGATVTAKVEKQGRAKKLTVYKYKPKKNYHKKQGHRQPYTKLTIDAINA</sequence>